<comment type="subcellular location">
    <subcellularLocation>
        <location evidence="2">Membrane</location>
        <topology evidence="2">Multi-pass membrane protein</topology>
    </subcellularLocation>
</comment>
<comment type="miscellaneous">
    <text evidence="2">Partially overlaps LSM8.</text>
</comment>
<comment type="caution">
    <text evidence="3">Product of a dubious gene prediction unlikely to encode a functional protein. Because of that it is not part of the S.cerevisiae S288c complete/reference proteome set.</text>
</comment>
<accession>P47094</accession>
<protein>
    <recommendedName>
        <fullName>Putative uncharacterized protein YJR023C</fullName>
    </recommendedName>
</protein>
<evidence type="ECO:0000255" key="1"/>
<evidence type="ECO:0000305" key="2"/>
<evidence type="ECO:0000305" key="3">
    <source>
    </source>
</evidence>
<dbReference type="EMBL" id="X87611">
    <property type="protein sequence ID" value="CAA60946.1"/>
    <property type="molecule type" value="Genomic_DNA"/>
</dbReference>
<dbReference type="EMBL" id="Z49522">
    <property type="protein sequence ID" value="CAA89548.1"/>
    <property type="molecule type" value="Genomic_DNA"/>
</dbReference>
<dbReference type="PIR" id="S57038">
    <property type="entry name" value="S57038"/>
</dbReference>
<dbReference type="DIP" id="DIP-2641N"/>
<dbReference type="IntAct" id="P47094">
    <property type="interactions" value="13"/>
</dbReference>
<dbReference type="MINT" id="P47094"/>
<dbReference type="STRING" id="4932.YJR023C"/>
<dbReference type="PaxDb" id="4932-YJR023C"/>
<dbReference type="EnsemblFungi" id="YJR023C_mRNA">
    <property type="protein sequence ID" value="YJR023C"/>
    <property type="gene ID" value="YJR023C"/>
</dbReference>
<dbReference type="AGR" id="SGD:S000003784"/>
<dbReference type="SGD" id="S000003784">
    <property type="gene designation" value="YJR023C"/>
</dbReference>
<dbReference type="HOGENOM" id="CLU_1907873_0_0_1"/>
<dbReference type="GO" id="GO:0016020">
    <property type="term" value="C:membrane"/>
    <property type="evidence" value="ECO:0007669"/>
    <property type="project" value="UniProtKB-SubCell"/>
</dbReference>
<gene>
    <name type="ordered locus">YJR023C</name>
    <name type="ORF">J1470</name>
    <name type="ORF">YJR83.19</name>
</gene>
<name>YJZ3_YEAST</name>
<keyword id="KW-0472">Membrane</keyword>
<keyword id="KW-0812">Transmembrane</keyword>
<keyword id="KW-1133">Transmembrane helix</keyword>
<sequence>MIYILLYMVLLLLLLLLLLLLLLLLLLLQLYYFVFDSYTFSHITCSFSILFLVSFSIGTFFSSIGARLSSFSASMRPTRAISLPRSNCALQMNSLLMRLKTLVMNRLVFLSKPFRLAMRHSPSTLIITTLLFK</sequence>
<organism>
    <name type="scientific">Saccharomyces cerevisiae (strain ATCC 204508 / S288c)</name>
    <name type="common">Baker's yeast</name>
    <dbReference type="NCBI Taxonomy" id="559292"/>
    <lineage>
        <taxon>Eukaryota</taxon>
        <taxon>Fungi</taxon>
        <taxon>Dikarya</taxon>
        <taxon>Ascomycota</taxon>
        <taxon>Saccharomycotina</taxon>
        <taxon>Saccharomycetes</taxon>
        <taxon>Saccharomycetales</taxon>
        <taxon>Saccharomycetaceae</taxon>
        <taxon>Saccharomyces</taxon>
    </lineage>
</organism>
<proteinExistence type="uncertain"/>
<reference key="1">
    <citation type="journal article" date="1996" name="EMBO J.">
        <title>Complete nucleotide sequence of Saccharomyces cerevisiae chromosome X.</title>
        <authorList>
            <person name="Galibert F."/>
            <person name="Alexandraki D."/>
            <person name="Baur A."/>
            <person name="Boles E."/>
            <person name="Chalwatzis N."/>
            <person name="Chuat J.-C."/>
            <person name="Coster F."/>
            <person name="Cziepluch C."/>
            <person name="de Haan M."/>
            <person name="Domdey H."/>
            <person name="Durand P."/>
            <person name="Entian K.-D."/>
            <person name="Gatius M."/>
            <person name="Goffeau A."/>
            <person name="Grivell L.A."/>
            <person name="Hennemann A."/>
            <person name="Herbert C.J."/>
            <person name="Heumann K."/>
            <person name="Hilger F."/>
            <person name="Hollenberg C.P."/>
            <person name="Huang M.-E."/>
            <person name="Jacq C."/>
            <person name="Jauniaux J.-C."/>
            <person name="Katsoulou C."/>
            <person name="Kirchrath L."/>
            <person name="Kleine K."/>
            <person name="Kordes E."/>
            <person name="Koetter P."/>
            <person name="Liebl S."/>
            <person name="Louis E.J."/>
            <person name="Manus V."/>
            <person name="Mewes H.-W."/>
            <person name="Miosga T."/>
            <person name="Obermaier B."/>
            <person name="Perea J."/>
            <person name="Pohl T.M."/>
            <person name="Portetelle D."/>
            <person name="Pujol A."/>
            <person name="Purnelle B."/>
            <person name="Ramezani Rad M."/>
            <person name="Rasmussen S.W."/>
            <person name="Rose M."/>
            <person name="Rossau R."/>
            <person name="Schaaff-Gerstenschlaeger I."/>
            <person name="Smits P.H.M."/>
            <person name="Scarcez T."/>
            <person name="Soriano N."/>
            <person name="To Van D."/>
            <person name="Tzermia M."/>
            <person name="Van Broekhoven A."/>
            <person name="Vandenbol M."/>
            <person name="Wedler H."/>
            <person name="von Wettstein D."/>
            <person name="Wambutt R."/>
            <person name="Zagulski M."/>
            <person name="Zollner A."/>
            <person name="Karpfinger-Hartl L."/>
        </authorList>
    </citation>
    <scope>NUCLEOTIDE SEQUENCE [LARGE SCALE GENOMIC DNA]</scope>
    <source>
        <strain>ATCC 204508 / S288c</strain>
    </source>
</reference>
<reference key="2">
    <citation type="journal article" date="2014" name="G3 (Bethesda)">
        <title>The reference genome sequence of Saccharomyces cerevisiae: Then and now.</title>
        <authorList>
            <person name="Engel S.R."/>
            <person name="Dietrich F.S."/>
            <person name="Fisk D.G."/>
            <person name="Binkley G."/>
            <person name="Balakrishnan R."/>
            <person name="Costanzo M.C."/>
            <person name="Dwight S.S."/>
            <person name="Hitz B.C."/>
            <person name="Karra K."/>
            <person name="Nash R.S."/>
            <person name="Weng S."/>
            <person name="Wong E.D."/>
            <person name="Lloyd P."/>
            <person name="Skrzypek M.S."/>
            <person name="Miyasato S.R."/>
            <person name="Simison M."/>
            <person name="Cherry J.M."/>
        </authorList>
    </citation>
    <scope>GENOME REANNOTATION</scope>
    <source>
        <strain>ATCC 204508 / S288c</strain>
    </source>
</reference>
<reference key="3">
    <citation type="journal article" date="1995" name="Yeast">
        <title>The sequence of 24.3 kb from chromosome X reveals five complete open reading frames, all of which correspond to new genes, and a tandem insertion of a Ty1 transposon.</title>
        <authorList>
            <person name="Zagulski M."/>
            <person name="Babinska B."/>
            <person name="Gromadka R."/>
            <person name="Migdalski A."/>
            <person name="Rytka J."/>
            <person name="Sulicka J."/>
            <person name="Herbert C.J."/>
        </authorList>
    </citation>
    <scope>NUCLEOTIDE SEQUENCE [GENOMIC DNA] OF 13-93</scope>
</reference>
<feature type="chain" id="PRO_0000203089" description="Putative uncharacterized protein YJR023C">
    <location>
        <begin position="1"/>
        <end position="133"/>
    </location>
</feature>
<feature type="transmembrane region" description="Helical" evidence="1">
    <location>
        <begin position="8"/>
        <end position="28"/>
    </location>
</feature>
<feature type="transmembrane region" description="Helical" evidence="1">
    <location>
        <begin position="46"/>
        <end position="66"/>
    </location>
</feature>
<feature type="sequence conflict" description="In Ref. 1; CAA60946." evidence="2" ref="1">
    <location>
        <position position="28"/>
    </location>
</feature>